<sequence>MYYINSPLDQFEMNTLLKFVTPFFDMSNLNITTFGLYIIIVLMVIVSLNILTTNNNTIIGSRWNLPLEMIYDTILNTTKGQIGGKLWGLYFPLIYTLFMFILIANLISLIPYSFALTAQIVFVISLSFIIWLGSTITGFNKHGWLFFSLFVPNGTPTPLVPLLVIIESLSYIARAFSLGLRLTCNILAGHLLMVILGGLLLNFININKLTLILGIIPFAMILAILCLEFAIAMIQSYVFATLTASYIKDSLYLH</sequence>
<reference key="1">
    <citation type="journal article" date="2007" name="Proc. Natl. Acad. Sci. U.S.A.">
        <title>Independent sorting-out of thousands of duplicated gene pairs in two yeast species descended from a whole-genome duplication.</title>
        <authorList>
            <person name="Scannell D.R."/>
            <person name="Frank A.C."/>
            <person name="Conant G.C."/>
            <person name="Byrne K.P."/>
            <person name="Woolfit M."/>
            <person name="Wolfe K.H."/>
        </authorList>
    </citation>
    <scope>NUCLEOTIDE SEQUENCE [LARGE SCALE GENOMIC DNA]</scope>
    <source>
        <strain>ATCC 22028 / DSM 70294 / BCRC 21397 / CBS 2163 / NBRC 10782 / NRRL Y-8283 / UCD 57-17</strain>
    </source>
</reference>
<evidence type="ECO:0000250" key="1"/>
<evidence type="ECO:0000255" key="2"/>
<evidence type="ECO:0000305" key="3"/>
<accession>A6H4Q8</accession>
<dbReference type="EMBL" id="AM698041">
    <property type="protein sequence ID" value="CAN85581.1"/>
    <property type="molecule type" value="Genomic_DNA"/>
</dbReference>
<dbReference type="RefSeq" id="YP_001331020.1">
    <property type="nucleotide sequence ID" value="NC_009638.1"/>
</dbReference>
<dbReference type="SMR" id="A6H4Q8"/>
<dbReference type="FunCoup" id="A6H4Q8">
    <property type="interactions" value="272"/>
</dbReference>
<dbReference type="STRING" id="436907.A6H4Q8"/>
<dbReference type="KEGG" id="vpo:VapofMp08"/>
<dbReference type="InParanoid" id="A6H4Q8"/>
<dbReference type="Proteomes" id="UP000000267">
    <property type="component" value="Mitochondrion"/>
</dbReference>
<dbReference type="GO" id="GO:0005743">
    <property type="term" value="C:mitochondrial inner membrane"/>
    <property type="evidence" value="ECO:0007669"/>
    <property type="project" value="UniProtKB-SubCell"/>
</dbReference>
<dbReference type="GO" id="GO:0045259">
    <property type="term" value="C:proton-transporting ATP synthase complex"/>
    <property type="evidence" value="ECO:0007669"/>
    <property type="project" value="UniProtKB-KW"/>
</dbReference>
<dbReference type="GO" id="GO:0046933">
    <property type="term" value="F:proton-transporting ATP synthase activity, rotational mechanism"/>
    <property type="evidence" value="ECO:0007669"/>
    <property type="project" value="TreeGrafter"/>
</dbReference>
<dbReference type="CDD" id="cd00310">
    <property type="entry name" value="ATP-synt_Fo_a_6"/>
    <property type="match status" value="1"/>
</dbReference>
<dbReference type="FunFam" id="1.20.120.220:FF:000003">
    <property type="entry name" value="ATP synthase subunit a"/>
    <property type="match status" value="1"/>
</dbReference>
<dbReference type="Gene3D" id="1.20.120.220">
    <property type="entry name" value="ATP synthase, F0 complex, subunit A"/>
    <property type="match status" value="1"/>
</dbReference>
<dbReference type="HAMAP" id="MF_01393">
    <property type="entry name" value="ATP_synth_a_bact"/>
    <property type="match status" value="1"/>
</dbReference>
<dbReference type="InterPro" id="IPR000568">
    <property type="entry name" value="ATP_synth_F0_asu"/>
</dbReference>
<dbReference type="InterPro" id="IPR045083">
    <property type="entry name" value="ATP_synth_F0_asu_bact/mt"/>
</dbReference>
<dbReference type="InterPro" id="IPR035908">
    <property type="entry name" value="F0_ATP_A_sf"/>
</dbReference>
<dbReference type="NCBIfam" id="TIGR01131">
    <property type="entry name" value="ATP_synt_6_or_A"/>
    <property type="match status" value="1"/>
</dbReference>
<dbReference type="PANTHER" id="PTHR11410">
    <property type="entry name" value="ATP SYNTHASE SUBUNIT A"/>
    <property type="match status" value="1"/>
</dbReference>
<dbReference type="PANTHER" id="PTHR11410:SF0">
    <property type="entry name" value="ATP SYNTHASE SUBUNIT A"/>
    <property type="match status" value="1"/>
</dbReference>
<dbReference type="Pfam" id="PF00119">
    <property type="entry name" value="ATP-synt_A"/>
    <property type="match status" value="1"/>
</dbReference>
<dbReference type="PRINTS" id="PR00123">
    <property type="entry name" value="ATPASEA"/>
</dbReference>
<dbReference type="SUPFAM" id="SSF81336">
    <property type="entry name" value="F1F0 ATP synthase subunit A"/>
    <property type="match status" value="1"/>
</dbReference>
<feature type="propeptide" id="PRO_0000356864" description="Removed in mature form" evidence="1">
    <location>
        <begin position="1"/>
        <end position="5"/>
    </location>
</feature>
<feature type="chain" id="PRO_0000356865" description="ATP synthase subunit a">
    <location>
        <begin position="6"/>
        <end position="254"/>
    </location>
</feature>
<feature type="transmembrane region" description="Helical" evidence="2">
    <location>
        <begin position="31"/>
        <end position="51"/>
    </location>
</feature>
<feature type="transmembrane region" description="Helical" evidence="2">
    <location>
        <begin position="87"/>
        <end position="107"/>
    </location>
</feature>
<feature type="transmembrane region" description="Helical" evidence="2">
    <location>
        <begin position="113"/>
        <end position="133"/>
    </location>
</feature>
<feature type="transmembrane region" description="Helical" evidence="2">
    <location>
        <begin position="146"/>
        <end position="166"/>
    </location>
</feature>
<feature type="transmembrane region" description="Helical" evidence="2">
    <location>
        <begin position="186"/>
        <end position="206"/>
    </location>
</feature>
<feature type="transmembrane region" description="Helical" evidence="2">
    <location>
        <begin position="211"/>
        <end position="231"/>
    </location>
</feature>
<keyword id="KW-0066">ATP synthesis</keyword>
<keyword id="KW-0138">CF(0)</keyword>
<keyword id="KW-0375">Hydrogen ion transport</keyword>
<keyword id="KW-0406">Ion transport</keyword>
<keyword id="KW-0472">Membrane</keyword>
<keyword id="KW-0496">Mitochondrion</keyword>
<keyword id="KW-0999">Mitochondrion inner membrane</keyword>
<keyword id="KW-1185">Reference proteome</keyword>
<keyword id="KW-0812">Transmembrane</keyword>
<keyword id="KW-1133">Transmembrane helix</keyword>
<keyword id="KW-0813">Transport</keyword>
<protein>
    <recommendedName>
        <fullName>ATP synthase subunit a</fullName>
    </recommendedName>
    <alternativeName>
        <fullName>ATP synthase subunit 6</fullName>
    </alternativeName>
    <alternativeName>
        <fullName>F-ATPase protein 6</fullName>
    </alternativeName>
</protein>
<comment type="function">
    <text evidence="1">Mitochondrial membrane ATP synthase (F(1)F(0) ATP synthase or Complex V) produces ATP from ADP in the presence of a proton gradient across the membrane which is generated by electron transport complexes of the respiratory chain. F-type ATPases consist of two structural domains, F(1) - containing the extramembraneous catalytic core and F(0) - containing the membrane proton channel, linked together by a central stalk and a peripheral stalk. During catalysis, ATP synthesis in the catalytic domain of F(1) is coupled via a rotary mechanism of the central stalk subunits to proton translocation. Key component of the proton channel; it may play a direct role in the translocation of protons across the membrane (By similarity).</text>
</comment>
<comment type="subunit">
    <text evidence="1">F-type ATPases have 2 components, CF(1) - the catalytic core - and CF(0) - the membrane proton channel. CF(1) has five subunits: alpha(3), beta(3), gamma(1), delta(1), epsilon(1). CF(0) has three main subunits: a, b and c (By similarity).</text>
</comment>
<comment type="subcellular location">
    <subcellularLocation>
        <location evidence="1">Mitochondrion inner membrane</location>
        <topology evidence="1">Multi-pass membrane protein</topology>
    </subcellularLocation>
</comment>
<comment type="similarity">
    <text evidence="3">Belongs to the ATPase A chain family.</text>
</comment>
<geneLocation type="mitochondrion"/>
<proteinExistence type="inferred from homology"/>
<name>ATP6_VANPO</name>
<gene>
    <name type="primary">ATP6</name>
    <name type="ORF">VapofMp08</name>
</gene>
<organism>
    <name type="scientific">Vanderwaltozyma polyspora (strain ATCC 22028 / DSM 70294 / BCRC 21397 / CBS 2163 / NBRC 10782 / NRRL Y-8283 / UCD 57-17)</name>
    <name type="common">Kluyveromyces polysporus</name>
    <dbReference type="NCBI Taxonomy" id="436907"/>
    <lineage>
        <taxon>Eukaryota</taxon>
        <taxon>Fungi</taxon>
        <taxon>Dikarya</taxon>
        <taxon>Ascomycota</taxon>
        <taxon>Saccharomycotina</taxon>
        <taxon>Saccharomycetes</taxon>
        <taxon>Saccharomycetales</taxon>
        <taxon>Saccharomycetaceae</taxon>
        <taxon>Vanderwaltozyma</taxon>
    </lineage>
</organism>